<accession>Q7V340</accession>
<keyword id="KW-0472">Membrane</keyword>
<keyword id="KW-0793">Thylakoid</keyword>
<keyword id="KW-0812">Transmembrane</keyword>
<keyword id="KW-1133">Transmembrane helix</keyword>
<proteinExistence type="inferred from homology"/>
<reference key="1">
    <citation type="journal article" date="2003" name="Nature">
        <title>Genome divergence in two Prochlorococcus ecotypes reflects oceanic niche differentiation.</title>
        <authorList>
            <person name="Rocap G."/>
            <person name="Larimer F.W."/>
            <person name="Lamerdin J.E."/>
            <person name="Malfatti S."/>
            <person name="Chain P."/>
            <person name="Ahlgren N.A."/>
            <person name="Arellano A."/>
            <person name="Coleman M."/>
            <person name="Hauser L."/>
            <person name="Hess W.R."/>
            <person name="Johnson Z.I."/>
            <person name="Land M.L."/>
            <person name="Lindell D."/>
            <person name="Post A.F."/>
            <person name="Regala W."/>
            <person name="Shah M."/>
            <person name="Shaw S.L."/>
            <person name="Steglich C."/>
            <person name="Sullivan M.B."/>
            <person name="Ting C.S."/>
            <person name="Tolonen A."/>
            <person name="Webb E.A."/>
            <person name="Zinser E.R."/>
            <person name="Chisholm S.W."/>
        </authorList>
    </citation>
    <scope>NUCLEOTIDE SEQUENCE [LARGE SCALE GENOMIC DNA]</scope>
    <source>
        <strain>CCMP1986 / NIES-2087 / MED4</strain>
    </source>
</reference>
<organism>
    <name type="scientific">Prochlorococcus marinus subsp. pastoris (strain CCMP1986 / NIES-2087 / MED4)</name>
    <dbReference type="NCBI Taxonomy" id="59919"/>
    <lineage>
        <taxon>Bacteria</taxon>
        <taxon>Bacillati</taxon>
        <taxon>Cyanobacteriota</taxon>
        <taxon>Cyanophyceae</taxon>
        <taxon>Synechococcales</taxon>
        <taxon>Prochlorococcaceae</taxon>
        <taxon>Prochlorococcus</taxon>
    </lineage>
</organism>
<evidence type="ECO:0000255" key="1">
    <source>
        <dbReference type="HAMAP-Rule" id="MF_00293"/>
    </source>
</evidence>
<evidence type="ECO:0000305" key="2"/>
<protein>
    <recommendedName>
        <fullName evidence="1">Protein PsbN</fullName>
    </recommendedName>
</protein>
<name>PSBN_PROMP</name>
<feature type="chain" id="PRO_0000232787" description="Protein PsbN">
    <location>
        <begin position="1"/>
        <end position="50"/>
    </location>
</feature>
<feature type="transmembrane region" description="Helical" evidence="1">
    <location>
        <begin position="14"/>
        <end position="34"/>
    </location>
</feature>
<comment type="function">
    <text evidence="1">May play a role in photosystem I and II biogenesis.</text>
</comment>
<comment type="subcellular location">
    <subcellularLocation>
        <location evidence="1">Cellular thylakoid membrane</location>
        <topology evidence="1">Single-pass membrane protein</topology>
    </subcellularLocation>
</comment>
<comment type="similarity">
    <text evidence="1">Belongs to the PsbN family.</text>
</comment>
<comment type="caution">
    <text evidence="1">Originally thought to be a component of PSII; based on experiments in Synechocystis, N.tabacum and barley, and its absence from PSII in T.elongatus and T.vulcanus, this is probably not true.</text>
</comment>
<comment type="sequence caution" evidence="2">
    <conflict type="erroneous initiation">
        <sequence resource="EMBL-CDS" id="CAE18711"/>
    </conflict>
    <text>Extended N-terminus.</text>
</comment>
<gene>
    <name evidence="1" type="primary">psbN</name>
    <name type="ordered locus">PMM0252</name>
</gene>
<dbReference type="EMBL" id="BX548174">
    <property type="protein sequence ID" value="CAE18711.1"/>
    <property type="status" value="ALT_INIT"/>
    <property type="molecule type" value="Genomic_DNA"/>
</dbReference>
<dbReference type="RefSeq" id="WP_011131890.1">
    <property type="nucleotide sequence ID" value="NC_005072.1"/>
</dbReference>
<dbReference type="SMR" id="Q7V340"/>
<dbReference type="STRING" id="59919.PMM0252"/>
<dbReference type="KEGG" id="pmm:PMM0252"/>
<dbReference type="eggNOG" id="ENOG5031YHY">
    <property type="taxonomic scope" value="Bacteria"/>
</dbReference>
<dbReference type="HOGENOM" id="CLU_205504_1_0_3"/>
<dbReference type="Proteomes" id="UP000001026">
    <property type="component" value="Chromosome"/>
</dbReference>
<dbReference type="GO" id="GO:0031676">
    <property type="term" value="C:plasma membrane-derived thylakoid membrane"/>
    <property type="evidence" value="ECO:0007669"/>
    <property type="project" value="UniProtKB-SubCell"/>
</dbReference>
<dbReference type="GO" id="GO:0015979">
    <property type="term" value="P:photosynthesis"/>
    <property type="evidence" value="ECO:0007669"/>
    <property type="project" value="InterPro"/>
</dbReference>
<dbReference type="HAMAP" id="MF_00293">
    <property type="entry name" value="PSII_PsbN"/>
    <property type="match status" value="1"/>
</dbReference>
<dbReference type="InterPro" id="IPR003398">
    <property type="entry name" value="PSII_PsbN"/>
</dbReference>
<dbReference type="NCBIfam" id="NF009650">
    <property type="entry name" value="PRK13183.1"/>
    <property type="match status" value="1"/>
</dbReference>
<dbReference type="Pfam" id="PF02468">
    <property type="entry name" value="PsbN"/>
    <property type="match status" value="1"/>
</dbReference>
<sequence length="50" mass="5225">MQTLSSAPDPAVSVAVTILAVLLALTGFGLWTAFGPKAAKLTDPWDDHDD</sequence>